<accession>P31709</accession>
<feature type="chain" id="PRO_0000207324" description="Type II secretion system protein M">
    <location>
        <begin position="1"/>
        <end position="164"/>
    </location>
</feature>
<feature type="topological domain" description="Cytoplasmic" evidence="1">
    <location>
        <begin position="1"/>
        <end position="17"/>
    </location>
</feature>
<feature type="transmembrane region" description="Helical" evidence="4">
    <location>
        <begin position="18"/>
        <end position="38"/>
    </location>
</feature>
<feature type="topological domain" description="Periplasmic" evidence="1">
    <location>
        <begin position="39"/>
        <end position="164"/>
    </location>
</feature>
<gene>
    <name type="primary">outM</name>
</gene>
<comment type="function">
    <text evidence="1">Inner membrane component of the type II secretion system required for the energy-dependent secretion of extracellular factors such as proteases and toxins from the periplasm. Plays a role in the complex assembly and recruits OutL resulting in a stable complex in the inner membrane. Provides thus a link between the energy-providing OutE protein in the cytoplasm and the rest of the T2SS machinery.</text>
</comment>
<comment type="subunit">
    <text evidence="1 2 3">Type II secretion system is composed of four main components: the outer membrane complex, the inner membrane complex, the cytoplasmic secretion ATPase and the periplasm-spanning pseudopilus (By similarity). Forms homodimers (By similarity). Interacts with OutL/GspL. Interacts with OutE/GspE and OutF/GspF (By similarity).</text>
</comment>
<comment type="subcellular location">
    <subcellularLocation>
        <location evidence="1">Cell inner membrane</location>
        <topology evidence="1">Single-pass membrane protein</topology>
    </subcellularLocation>
</comment>
<comment type="similarity">
    <text evidence="5">Belongs to the GSP M family.</text>
</comment>
<reference key="1">
    <citation type="journal article" date="1993" name="Mol. Microbiol.">
        <title>Molecular cloning and characterization of 13 out genes from Erwinia carotovora subspecies carotovora: genes encoding members of a general secretion pathway (GSP) widespread in Gram-negative bacteria.</title>
        <authorList>
            <person name="Reeves P.J."/>
            <person name="Whitcombe D."/>
            <person name="Wharam S."/>
            <person name="Gibson M."/>
            <person name="Allison G."/>
            <person name="Bunce N."/>
            <person name="Barallon R."/>
            <person name="Douglas P."/>
            <person name="Mulholland V."/>
            <person name="Stevens S."/>
            <person name="Walker S."/>
            <person name="Salmond G.P.C."/>
        </authorList>
    </citation>
    <scope>NUCLEOTIDE SEQUENCE [GENOMIC DNA]</scope>
    <source>
        <strain>SCRI 193</strain>
    </source>
</reference>
<keyword id="KW-0997">Cell inner membrane</keyword>
<keyword id="KW-1003">Cell membrane</keyword>
<keyword id="KW-0472">Membrane</keyword>
<keyword id="KW-0653">Protein transport</keyword>
<keyword id="KW-0812">Transmembrane</keyword>
<keyword id="KW-1133">Transmembrane helix</keyword>
<keyword id="KW-0813">Transport</keyword>
<organism>
    <name type="scientific">Pectobacterium carotovorum subsp. carotovorum</name>
    <name type="common">Erwinia carotovora subsp. carotovora</name>
    <dbReference type="NCBI Taxonomy" id="555"/>
    <lineage>
        <taxon>Bacteria</taxon>
        <taxon>Pseudomonadati</taxon>
        <taxon>Pseudomonadota</taxon>
        <taxon>Gammaproteobacteria</taxon>
        <taxon>Enterobacterales</taxon>
        <taxon>Pectobacteriaceae</taxon>
        <taxon>Pectobacterium</taxon>
    </lineage>
</organism>
<name>GSPM_PECCC</name>
<sequence length="164" mass="18771">MNELRQRWQAMSQRERQLMVVCAAVLLLCVVYYAILQPWQEREDLWERTISREQQTVNWMQKQASSIPRGNQAQGDNSQRDVSLPILISQSTKRYGLTVVRLQPQGSQASVTLGQSDFNSLLRWLGELEQKNGVKVISLDVNAVEQSPGIVDVTRLMLERTDEA</sequence>
<dbReference type="EMBL" id="X70049">
    <property type="protein sequence ID" value="CAA49654.1"/>
    <property type="molecule type" value="Genomic_DNA"/>
</dbReference>
<dbReference type="PIR" id="S32867">
    <property type="entry name" value="S32867"/>
</dbReference>
<dbReference type="SMR" id="P31709"/>
<dbReference type="GO" id="GO:0005886">
    <property type="term" value="C:plasma membrane"/>
    <property type="evidence" value="ECO:0007669"/>
    <property type="project" value="UniProtKB-SubCell"/>
</dbReference>
<dbReference type="GO" id="GO:0015627">
    <property type="term" value="C:type II protein secretion system complex"/>
    <property type="evidence" value="ECO:0007669"/>
    <property type="project" value="InterPro"/>
</dbReference>
<dbReference type="GO" id="GO:0015628">
    <property type="term" value="P:protein secretion by the type II secretion system"/>
    <property type="evidence" value="ECO:0007669"/>
    <property type="project" value="InterPro"/>
</dbReference>
<dbReference type="Gene3D" id="3.30.1360.100">
    <property type="entry name" value="General secretion pathway protein M, EpsM"/>
    <property type="match status" value="1"/>
</dbReference>
<dbReference type="InterPro" id="IPR007690">
    <property type="entry name" value="T2SS_GspM"/>
</dbReference>
<dbReference type="InterPro" id="IPR023229">
    <property type="entry name" value="T2SS_M_periplasmic_sf"/>
</dbReference>
<dbReference type="Pfam" id="PF04612">
    <property type="entry name" value="T2SSM"/>
    <property type="match status" value="1"/>
</dbReference>
<dbReference type="PIRSF" id="PIRSF006291">
    <property type="entry name" value="GspM"/>
    <property type="match status" value="1"/>
</dbReference>
<dbReference type="SUPFAM" id="SSF103054">
    <property type="entry name" value="General secretion pathway protein M, EpsM"/>
    <property type="match status" value="1"/>
</dbReference>
<protein>
    <recommendedName>
        <fullName>Type II secretion system protein M</fullName>
        <shortName>T2SS protein M</shortName>
    </recommendedName>
    <alternativeName>
        <fullName>General secretion pathway protein M</fullName>
    </alternativeName>
    <alternativeName>
        <fullName>Pectic enzymes secretion protein OutM</fullName>
    </alternativeName>
</protein>
<proteinExistence type="inferred from homology"/>
<evidence type="ECO:0000250" key="1">
    <source>
        <dbReference type="UniProtKB" id="P25061"/>
    </source>
</evidence>
<evidence type="ECO:0000250" key="2">
    <source>
        <dbReference type="UniProtKB" id="P41851"/>
    </source>
</evidence>
<evidence type="ECO:0000250" key="3">
    <source>
        <dbReference type="UniProtKB" id="Q00514"/>
    </source>
</evidence>
<evidence type="ECO:0000255" key="4"/>
<evidence type="ECO:0000305" key="5"/>